<keyword id="KW-0324">Glycolysis</keyword>
<keyword id="KW-0413">Isomerase</keyword>
<gene>
    <name evidence="1" type="primary">gpmB</name>
    <name type="ordered locus">SeD_A4997</name>
</gene>
<reference key="1">
    <citation type="journal article" date="2011" name="J. Bacteriol.">
        <title>Comparative genomics of 28 Salmonella enterica isolates: evidence for CRISPR-mediated adaptive sublineage evolution.</title>
        <authorList>
            <person name="Fricke W.F."/>
            <person name="Mammel M.K."/>
            <person name="McDermott P.F."/>
            <person name="Tartera C."/>
            <person name="White D.G."/>
            <person name="Leclerc J.E."/>
            <person name="Ravel J."/>
            <person name="Cebula T.A."/>
        </authorList>
    </citation>
    <scope>NUCLEOTIDE SEQUENCE [LARGE SCALE GENOMIC DNA]</scope>
    <source>
        <strain>CT_02021853</strain>
    </source>
</reference>
<dbReference type="EC" id="5.4.2.-" evidence="1"/>
<dbReference type="EMBL" id="CP001144">
    <property type="protein sequence ID" value="ACH74747.1"/>
    <property type="molecule type" value="Genomic_DNA"/>
</dbReference>
<dbReference type="RefSeq" id="WP_000942363.1">
    <property type="nucleotide sequence ID" value="NC_011205.1"/>
</dbReference>
<dbReference type="SMR" id="B5FTD9"/>
<dbReference type="KEGG" id="sed:SeD_A4997"/>
<dbReference type="HOGENOM" id="CLU_033323_9_5_6"/>
<dbReference type="UniPathway" id="UPA00109">
    <property type="reaction ID" value="UER00186"/>
</dbReference>
<dbReference type="Proteomes" id="UP000008322">
    <property type="component" value="Chromosome"/>
</dbReference>
<dbReference type="GO" id="GO:0005737">
    <property type="term" value="C:cytoplasm"/>
    <property type="evidence" value="ECO:0007669"/>
    <property type="project" value="TreeGrafter"/>
</dbReference>
<dbReference type="GO" id="GO:0016791">
    <property type="term" value="F:phosphatase activity"/>
    <property type="evidence" value="ECO:0007669"/>
    <property type="project" value="TreeGrafter"/>
</dbReference>
<dbReference type="GO" id="GO:0004619">
    <property type="term" value="F:phosphoglycerate mutase activity"/>
    <property type="evidence" value="ECO:0007669"/>
    <property type="project" value="UniProtKB-UniRule"/>
</dbReference>
<dbReference type="GO" id="GO:0006096">
    <property type="term" value="P:glycolytic process"/>
    <property type="evidence" value="ECO:0007669"/>
    <property type="project" value="UniProtKB-UniRule"/>
</dbReference>
<dbReference type="CDD" id="cd07067">
    <property type="entry name" value="HP_PGM_like"/>
    <property type="match status" value="1"/>
</dbReference>
<dbReference type="Gene3D" id="3.40.50.1240">
    <property type="entry name" value="Phosphoglycerate mutase-like"/>
    <property type="match status" value="1"/>
</dbReference>
<dbReference type="HAMAP" id="MF_01040">
    <property type="entry name" value="PGAM_GpmB"/>
    <property type="match status" value="1"/>
</dbReference>
<dbReference type="InterPro" id="IPR013078">
    <property type="entry name" value="His_Pase_superF_clade-1"/>
</dbReference>
<dbReference type="InterPro" id="IPR029033">
    <property type="entry name" value="His_PPase_superfam"/>
</dbReference>
<dbReference type="InterPro" id="IPR001345">
    <property type="entry name" value="PG/BPGM_mutase_AS"/>
</dbReference>
<dbReference type="InterPro" id="IPR050275">
    <property type="entry name" value="PGM_Phosphatase"/>
</dbReference>
<dbReference type="InterPro" id="IPR023086">
    <property type="entry name" value="Phosphoglycerate_mutase_GpmB"/>
</dbReference>
<dbReference type="NCBIfam" id="NF002901">
    <property type="entry name" value="PRK03482.1"/>
    <property type="match status" value="1"/>
</dbReference>
<dbReference type="PANTHER" id="PTHR48100">
    <property type="entry name" value="BROAD-SPECIFICITY PHOSPHATASE YOR283W-RELATED"/>
    <property type="match status" value="1"/>
</dbReference>
<dbReference type="PANTHER" id="PTHR48100:SF1">
    <property type="entry name" value="HISTIDINE PHOSPHATASE FAMILY PROTEIN-RELATED"/>
    <property type="match status" value="1"/>
</dbReference>
<dbReference type="Pfam" id="PF00300">
    <property type="entry name" value="His_Phos_1"/>
    <property type="match status" value="1"/>
</dbReference>
<dbReference type="SMART" id="SM00855">
    <property type="entry name" value="PGAM"/>
    <property type="match status" value="1"/>
</dbReference>
<dbReference type="SUPFAM" id="SSF53254">
    <property type="entry name" value="Phosphoglycerate mutase-like"/>
    <property type="match status" value="1"/>
</dbReference>
<dbReference type="PROSITE" id="PS00175">
    <property type="entry name" value="PG_MUTASE"/>
    <property type="match status" value="1"/>
</dbReference>
<name>GPMB_SALDC</name>
<sequence>MLQVYLVRHGETQWNAERRIQGQSDSPLTAKGEQQAMQVGERARSLGITHIISSDLGRTKRTAEIIAQACGCDITFDSRLRELDMGVLEKRQIDSLTEEEEGWRRQLVNGTQDGRIPGGESMQELSDRVHAALASCLELPQGSRPLLVSHGIALGCLVSTILGLPAWAERRLRLRNCSISRIDYQESQWLASGWVVETAGDVSHLDAPALDELQR</sequence>
<organism>
    <name type="scientific">Salmonella dublin (strain CT_02021853)</name>
    <dbReference type="NCBI Taxonomy" id="439851"/>
    <lineage>
        <taxon>Bacteria</taxon>
        <taxon>Pseudomonadati</taxon>
        <taxon>Pseudomonadota</taxon>
        <taxon>Gammaproteobacteria</taxon>
        <taxon>Enterobacterales</taxon>
        <taxon>Enterobacteriaceae</taxon>
        <taxon>Salmonella</taxon>
    </lineage>
</organism>
<evidence type="ECO:0000255" key="1">
    <source>
        <dbReference type="HAMAP-Rule" id="MF_01040"/>
    </source>
</evidence>
<proteinExistence type="inferred from homology"/>
<feature type="chain" id="PRO_1000136012" description="Probable phosphoglycerate mutase GpmB">
    <location>
        <begin position="1"/>
        <end position="215"/>
    </location>
</feature>
<feature type="active site" description="Tele-phosphohistidine intermediate" evidence="1">
    <location>
        <position position="9"/>
    </location>
</feature>
<feature type="active site" description="Proton donor/acceptor" evidence="1">
    <location>
        <position position="82"/>
    </location>
</feature>
<feature type="binding site" evidence="1">
    <location>
        <begin position="8"/>
        <end position="15"/>
    </location>
    <ligand>
        <name>substrate</name>
    </ligand>
</feature>
<feature type="binding site" evidence="1">
    <location>
        <begin position="21"/>
        <end position="22"/>
    </location>
    <ligand>
        <name>substrate</name>
    </ligand>
</feature>
<feature type="binding site" evidence="1">
    <location>
        <position position="58"/>
    </location>
    <ligand>
        <name>substrate</name>
    </ligand>
</feature>
<feature type="binding site" evidence="1">
    <location>
        <position position="60"/>
    </location>
    <ligand>
        <name>substrate</name>
    </ligand>
</feature>
<feature type="binding site" evidence="1">
    <location>
        <begin position="82"/>
        <end position="85"/>
    </location>
    <ligand>
        <name>substrate</name>
    </ligand>
</feature>
<feature type="binding site" evidence="1">
    <location>
        <begin position="104"/>
        <end position="105"/>
    </location>
    <ligand>
        <name>substrate</name>
    </ligand>
</feature>
<feature type="binding site" evidence="1">
    <location>
        <begin position="151"/>
        <end position="152"/>
    </location>
    <ligand>
        <name>substrate</name>
    </ligand>
</feature>
<feature type="site" description="Transition state stabilizer" evidence="1">
    <location>
        <position position="150"/>
    </location>
</feature>
<protein>
    <recommendedName>
        <fullName evidence="1">Probable phosphoglycerate mutase GpmB</fullName>
        <ecNumber evidence="1">5.4.2.-</ecNumber>
    </recommendedName>
    <alternativeName>
        <fullName evidence="1">PGAM</fullName>
    </alternativeName>
    <alternativeName>
        <fullName evidence="1">Phosphoglyceromutase</fullName>
    </alternativeName>
</protein>
<comment type="catalytic activity">
    <reaction evidence="1">
        <text>(2R)-2-phosphoglycerate = (2R)-3-phosphoglycerate</text>
        <dbReference type="Rhea" id="RHEA:15901"/>
        <dbReference type="ChEBI" id="CHEBI:58272"/>
        <dbReference type="ChEBI" id="CHEBI:58289"/>
    </reaction>
</comment>
<comment type="pathway">
    <text evidence="1">Carbohydrate degradation; glycolysis; pyruvate from D-glyceraldehyde 3-phosphate: step 3/5.</text>
</comment>
<comment type="similarity">
    <text evidence="1">Belongs to the phosphoglycerate mutase family. GpmB subfamily.</text>
</comment>
<accession>B5FTD9</accession>